<name>ZFPL1_NEMVE</name>
<protein>
    <recommendedName>
        <fullName>Zinc finger protein-like 1 homolog</fullName>
    </recommendedName>
</protein>
<accession>A7S7Z9</accession>
<reference key="1">
    <citation type="journal article" date="2007" name="Science">
        <title>Sea anemone genome reveals ancestral eumetazoan gene repertoire and genomic organization.</title>
        <authorList>
            <person name="Putnam N.H."/>
            <person name="Srivastava M."/>
            <person name="Hellsten U."/>
            <person name="Dirks B."/>
            <person name="Chapman J."/>
            <person name="Salamov A."/>
            <person name="Terry A."/>
            <person name="Shapiro H."/>
            <person name="Lindquist E."/>
            <person name="Kapitonov V.V."/>
            <person name="Jurka J."/>
            <person name="Genikhovich G."/>
            <person name="Grigoriev I.V."/>
            <person name="Lucas S.M."/>
            <person name="Steele R.E."/>
            <person name="Finnerty J.R."/>
            <person name="Technau U."/>
            <person name="Martindale M.Q."/>
            <person name="Rokhsar D.S."/>
        </authorList>
    </citation>
    <scope>NUCLEOTIDE SEQUENCE [LARGE SCALE GENOMIC DNA]</scope>
    <source>
        <strain>CH2 X CH6</strain>
    </source>
</reference>
<keyword id="KW-0472">Membrane</keyword>
<keyword id="KW-0479">Metal-binding</keyword>
<keyword id="KW-1185">Reference proteome</keyword>
<keyword id="KW-0812">Transmembrane</keyword>
<keyword id="KW-1133">Transmembrane helix</keyword>
<keyword id="KW-0862">Zinc</keyword>
<keyword id="KW-0863">Zinc-finger</keyword>
<feature type="chain" id="PRO_0000342149" description="Zinc finger protein-like 1 homolog">
    <location>
        <begin position="1"/>
        <end position="252"/>
    </location>
</feature>
<feature type="transmembrane region" description="Helical" evidence="1">
    <location>
        <begin position="207"/>
        <end position="227"/>
    </location>
</feature>
<feature type="zinc finger region" description="B box-type; degenerate">
    <location>
        <begin position="1"/>
        <end position="43"/>
    </location>
</feature>
<feature type="zinc finger region" description="RING-type; degenerate" evidence="2">
    <location>
        <begin position="53"/>
        <end position="101"/>
    </location>
</feature>
<sequence length="252" mass="28495">MGLCKCPKKKVTNQFCFEHRVNVCEYCLVSSHSRCIVKSYLHWLQDSDYNPVCTLCNGNLSDGDVVRLICYDVFHLSCINNFAQSLPPNTAPAGYTCPNCKNGIFPPEKMVSPVVEQLKQKLSATSWAKAGLGIPVAPLEPLLFSSTVSRKIPEKRPEESLNTSVDHDENKYQRRGAIDWFSRWFGNRVNTKKQTYDDPNASLKRTMMIFFLVILAFVTVTVIFTRVGRNAAANDPFLDPRSNPHIRVEKDS</sequence>
<evidence type="ECO:0000255" key="1"/>
<evidence type="ECO:0000255" key="2">
    <source>
        <dbReference type="PROSITE-ProRule" id="PRU00175"/>
    </source>
</evidence>
<evidence type="ECO:0000305" key="3"/>
<comment type="subcellular location">
    <subcellularLocation>
        <location evidence="3">Membrane</location>
        <topology evidence="3">Single-pass membrane protein</topology>
    </subcellularLocation>
</comment>
<comment type="similarity">
    <text evidence="3">Belongs to the ZFPL1 family.</text>
</comment>
<organism>
    <name type="scientific">Nematostella vectensis</name>
    <name type="common">Starlet sea anemone</name>
    <dbReference type="NCBI Taxonomy" id="45351"/>
    <lineage>
        <taxon>Eukaryota</taxon>
        <taxon>Metazoa</taxon>
        <taxon>Cnidaria</taxon>
        <taxon>Anthozoa</taxon>
        <taxon>Hexacorallia</taxon>
        <taxon>Actiniaria</taxon>
        <taxon>Edwardsiidae</taxon>
        <taxon>Nematostella</taxon>
    </lineage>
</organism>
<dbReference type="EMBL" id="DS469595">
    <property type="protein sequence ID" value="EDO40209.1"/>
    <property type="molecule type" value="Genomic_DNA"/>
</dbReference>
<dbReference type="RefSeq" id="XP_001632272.1">
    <property type="nucleotide sequence ID" value="XM_001632222.1"/>
</dbReference>
<dbReference type="STRING" id="45351.A7S7Z9"/>
<dbReference type="EnsemblMetazoa" id="EDO40209">
    <property type="protein sequence ID" value="EDO40209"/>
    <property type="gene ID" value="NEMVEDRAFT_v1g208192"/>
</dbReference>
<dbReference type="eggNOG" id="KOG3970">
    <property type="taxonomic scope" value="Eukaryota"/>
</dbReference>
<dbReference type="HOGENOM" id="CLU_075387_0_0_1"/>
<dbReference type="InParanoid" id="A7S7Z9"/>
<dbReference type="OMA" id="HDHDYNP"/>
<dbReference type="PhylomeDB" id="A7S7Z9"/>
<dbReference type="Proteomes" id="UP000001593">
    <property type="component" value="Unassembled WGS sequence"/>
</dbReference>
<dbReference type="GO" id="GO:0005794">
    <property type="term" value="C:Golgi apparatus"/>
    <property type="evidence" value="ECO:0000318"/>
    <property type="project" value="GO_Central"/>
</dbReference>
<dbReference type="GO" id="GO:0016020">
    <property type="term" value="C:membrane"/>
    <property type="evidence" value="ECO:0007669"/>
    <property type="project" value="UniProtKB-SubCell"/>
</dbReference>
<dbReference type="GO" id="GO:0008270">
    <property type="term" value="F:zinc ion binding"/>
    <property type="evidence" value="ECO:0007669"/>
    <property type="project" value="UniProtKB-KW"/>
</dbReference>
<dbReference type="CDD" id="cd16487">
    <property type="entry name" value="mRING-H2-C3DHC3_ZFPL1"/>
    <property type="match status" value="1"/>
</dbReference>
<dbReference type="Gene3D" id="3.30.40.10">
    <property type="entry name" value="Zinc/RING finger domain, C3HC4 (zinc finger)"/>
    <property type="match status" value="1"/>
</dbReference>
<dbReference type="InterPro" id="IPR039043">
    <property type="entry name" value="ZFPL1"/>
</dbReference>
<dbReference type="InterPro" id="IPR001841">
    <property type="entry name" value="Znf_RING"/>
</dbReference>
<dbReference type="InterPro" id="IPR013083">
    <property type="entry name" value="Znf_RING/FYVE/PHD"/>
</dbReference>
<dbReference type="PANTHER" id="PTHR12981">
    <property type="entry name" value="ZINC FINGER PROTEIN-LIKE 1"/>
    <property type="match status" value="1"/>
</dbReference>
<dbReference type="PANTHER" id="PTHR12981:SF0">
    <property type="entry name" value="ZINC FINGER PROTEIN-LIKE 1"/>
    <property type="match status" value="1"/>
</dbReference>
<dbReference type="SUPFAM" id="SSF57850">
    <property type="entry name" value="RING/U-box"/>
    <property type="match status" value="1"/>
</dbReference>
<dbReference type="PROSITE" id="PS50089">
    <property type="entry name" value="ZF_RING_2"/>
    <property type="match status" value="1"/>
</dbReference>
<proteinExistence type="inferred from homology"/>
<gene>
    <name type="primary">zfpl1</name>
    <name type="ORF">v1g208192</name>
</gene>